<feature type="chain" id="PRO_0000247221" description="5'-nucleotidase domain-containing protein 1">
    <location>
        <begin position="1"/>
        <end position="452"/>
    </location>
</feature>
<feature type="region of interest" description="Disordered" evidence="3">
    <location>
        <begin position="339"/>
        <end position="365"/>
    </location>
</feature>
<feature type="compositionally biased region" description="Basic and acidic residues" evidence="3">
    <location>
        <begin position="339"/>
        <end position="361"/>
    </location>
</feature>
<feature type="active site" description="Nucleophile" evidence="1">
    <location>
        <position position="16"/>
    </location>
</feature>
<feature type="active site" description="Proton donor" evidence="1">
    <location>
        <position position="18"/>
    </location>
</feature>
<feature type="binding site" evidence="1">
    <location>
        <position position="16"/>
    </location>
    <ligand>
        <name>Mg(2+)</name>
        <dbReference type="ChEBI" id="CHEBI:18420"/>
    </ligand>
</feature>
<feature type="binding site" evidence="1">
    <location>
        <position position="18"/>
    </location>
    <ligand>
        <name>Mg(2+)</name>
        <dbReference type="ChEBI" id="CHEBI:18420"/>
    </ligand>
</feature>
<feature type="binding site" evidence="1">
    <location>
        <position position="313"/>
    </location>
    <ligand>
        <name>Mg(2+)</name>
        <dbReference type="ChEBI" id="CHEBI:18420"/>
    </ligand>
</feature>
<feature type="modified residue" description="N6-acetyllysine" evidence="2">
    <location>
        <position position="171"/>
    </location>
</feature>
<dbReference type="EC" id="3.1.3.-"/>
<dbReference type="EMBL" id="BC109642">
    <property type="protein sequence ID" value="AAI09643.1"/>
    <property type="molecule type" value="mRNA"/>
</dbReference>
<dbReference type="RefSeq" id="NP_001098955.1">
    <property type="nucleotide sequence ID" value="NM_001105485.1"/>
</dbReference>
<dbReference type="SMR" id="Q2TBU5"/>
<dbReference type="FunCoup" id="Q2TBU5">
    <property type="interactions" value="1136"/>
</dbReference>
<dbReference type="STRING" id="9913.ENSBTAP00000004003"/>
<dbReference type="PaxDb" id="9913-ENSBTAP00000004003"/>
<dbReference type="Ensembl" id="ENSBTAT00000004003.4">
    <property type="protein sequence ID" value="ENSBTAP00000004003.3"/>
    <property type="gene ID" value="ENSBTAG00000003076.5"/>
</dbReference>
<dbReference type="GeneID" id="100125914"/>
<dbReference type="KEGG" id="bta:100125914"/>
<dbReference type="CTD" id="221294"/>
<dbReference type="VEuPathDB" id="HostDB:ENSBTAG00000003076"/>
<dbReference type="VGNC" id="VGNC:32294">
    <property type="gene designation" value="NT5DC1"/>
</dbReference>
<dbReference type="eggNOG" id="KOG2469">
    <property type="taxonomic scope" value="Eukaryota"/>
</dbReference>
<dbReference type="GeneTree" id="ENSGT00940000155676"/>
<dbReference type="HOGENOM" id="CLU_029966_0_0_1"/>
<dbReference type="InParanoid" id="Q2TBU5"/>
<dbReference type="OMA" id="ICSNPYG"/>
<dbReference type="OrthoDB" id="6503940at2759"/>
<dbReference type="TreeFam" id="TF325912"/>
<dbReference type="Proteomes" id="UP000009136">
    <property type="component" value="Chromosome 9"/>
</dbReference>
<dbReference type="Bgee" id="ENSBTAG00000003076">
    <property type="expression patterns" value="Expressed in spermatid and 106 other cell types or tissues"/>
</dbReference>
<dbReference type="GO" id="GO:0008253">
    <property type="term" value="F:5'-nucleotidase activity"/>
    <property type="evidence" value="ECO:0000318"/>
    <property type="project" value="GO_Central"/>
</dbReference>
<dbReference type="GO" id="GO:0046872">
    <property type="term" value="F:metal ion binding"/>
    <property type="evidence" value="ECO:0007669"/>
    <property type="project" value="UniProtKB-KW"/>
</dbReference>
<dbReference type="FunFam" id="3.40.50.1000:FF:000086">
    <property type="entry name" value="LD24878p"/>
    <property type="match status" value="1"/>
</dbReference>
<dbReference type="Gene3D" id="3.40.50.1000">
    <property type="entry name" value="HAD superfamily/HAD-like"/>
    <property type="match status" value="1"/>
</dbReference>
<dbReference type="InterPro" id="IPR036412">
    <property type="entry name" value="HAD-like_sf"/>
</dbReference>
<dbReference type="InterPro" id="IPR008380">
    <property type="entry name" value="HAD-SF_hydro_IG_5-nucl"/>
</dbReference>
<dbReference type="InterPro" id="IPR023214">
    <property type="entry name" value="HAD_sf"/>
</dbReference>
<dbReference type="PANTHER" id="PTHR12103">
    <property type="entry name" value="5'-NUCLEOTIDASE DOMAIN-CONTAINING"/>
    <property type="match status" value="1"/>
</dbReference>
<dbReference type="PANTHER" id="PTHR12103:SF38">
    <property type="entry name" value="5'-NUCLEOTIDASE DOMAIN-CONTAINING PROTEIN 1"/>
    <property type="match status" value="1"/>
</dbReference>
<dbReference type="Pfam" id="PF05761">
    <property type="entry name" value="5_nucleotid"/>
    <property type="match status" value="1"/>
</dbReference>
<dbReference type="SUPFAM" id="SSF56784">
    <property type="entry name" value="HAD-like"/>
    <property type="match status" value="1"/>
</dbReference>
<protein>
    <recommendedName>
        <fullName>5'-nucleotidase domain-containing protein 1</fullName>
        <ecNumber>3.1.3.-</ecNumber>
    </recommendedName>
</protein>
<name>NT5D1_BOVIN</name>
<keyword id="KW-0007">Acetylation</keyword>
<keyword id="KW-0378">Hydrolase</keyword>
<keyword id="KW-0460">Magnesium</keyword>
<keyword id="KW-0479">Metal-binding</keyword>
<keyword id="KW-1185">Reference proteome</keyword>
<evidence type="ECO:0000250" key="1"/>
<evidence type="ECO:0000250" key="2">
    <source>
        <dbReference type="UniProtKB" id="Q5TFE4"/>
    </source>
</evidence>
<evidence type="ECO:0000256" key="3">
    <source>
        <dbReference type="SAM" id="MobiDB-lite"/>
    </source>
</evidence>
<evidence type="ECO:0000305" key="4"/>
<comment type="similarity">
    <text evidence="4">Belongs to the 5'(3')-deoxyribonucleotidase family.</text>
</comment>
<gene>
    <name type="primary">NT5DC1</name>
</gene>
<organism>
    <name type="scientific">Bos taurus</name>
    <name type="common">Bovine</name>
    <dbReference type="NCBI Taxonomy" id="9913"/>
    <lineage>
        <taxon>Eukaryota</taxon>
        <taxon>Metazoa</taxon>
        <taxon>Chordata</taxon>
        <taxon>Craniata</taxon>
        <taxon>Vertebrata</taxon>
        <taxon>Euteleostomi</taxon>
        <taxon>Mammalia</taxon>
        <taxon>Eutheria</taxon>
        <taxon>Laurasiatheria</taxon>
        <taxon>Artiodactyla</taxon>
        <taxon>Ruminantia</taxon>
        <taxon>Pecora</taxon>
        <taxon>Bovidae</taxon>
        <taxon>Bovinae</taxon>
        <taxon>Bos</taxon>
    </lineage>
</organism>
<reference key="1">
    <citation type="submission" date="2005-11" db="EMBL/GenBank/DDBJ databases">
        <authorList>
            <consortium name="NIH - Mammalian Gene Collection (MGC) project"/>
        </authorList>
    </citation>
    <scope>NUCLEOTIDE SEQUENCE [LARGE SCALE MRNA]</scope>
    <source>
        <strain>Crossbred X Angus</strain>
        <tissue>Liver</tissue>
    </source>
</reference>
<accession>Q2TBU5</accession>
<proteinExistence type="evidence at transcript level"/>
<sequence>MAQHFSLAACDVVGFDLDHTLCCYNLPESARLIYNSFAQFLVKEKGYDKGLLTVTPEDWDFCCKGLALDLEDGNFIKLADNGTVLRASHGTKMLSAEALAEEFGRKEWKHFMPDTGMAFRSGKYYFYDNYFDLPGALLCARVVDSLTKQNNGQKPFDFWKDIVAGIQHNYKMSAFKENCGIYFPEIKRDPGKYLHTCPESVKKWLRQLKNAGKILMLITSSHSDYCRLLCQYILGNDFEDLFDIVITNALKPGFFSHLPSQRPFRTLENDEEREALPFLDKPGWYSQGNAVHLYELLKKMTGKPEPKVVYFGDSMHSDIFPACHYSNWETVLILEELRGDKDGKPEESEPEEKKGKYEGSKAKPLNTSSKKWGSFFIDSVSGLENREDSLVYTWSCKRISAYSTIAIPSIEAIAELPLDYKFTRFSSNNSKTAGYYPNPPLVLSNAGKLTAK</sequence>